<name>SYFA_SHESH</name>
<proteinExistence type="inferred from homology"/>
<keyword id="KW-0030">Aminoacyl-tRNA synthetase</keyword>
<keyword id="KW-0067">ATP-binding</keyword>
<keyword id="KW-0963">Cytoplasm</keyword>
<keyword id="KW-0436">Ligase</keyword>
<keyword id="KW-0460">Magnesium</keyword>
<keyword id="KW-0479">Metal-binding</keyword>
<keyword id="KW-0547">Nucleotide-binding</keyword>
<keyword id="KW-0648">Protein biosynthesis</keyword>
<keyword id="KW-1185">Reference proteome</keyword>
<gene>
    <name evidence="1" type="primary">pheS</name>
    <name type="ordered locus">Ssed_2598</name>
</gene>
<organism>
    <name type="scientific">Shewanella sediminis (strain HAW-EB3)</name>
    <dbReference type="NCBI Taxonomy" id="425104"/>
    <lineage>
        <taxon>Bacteria</taxon>
        <taxon>Pseudomonadati</taxon>
        <taxon>Pseudomonadota</taxon>
        <taxon>Gammaproteobacteria</taxon>
        <taxon>Alteromonadales</taxon>
        <taxon>Shewanellaceae</taxon>
        <taxon>Shewanella</taxon>
    </lineage>
</organism>
<sequence length="327" mass="37244">MSQLTEIVEQALAAIEGTEDLKALDELRVDYLGKKGKITDMMKMMGKLSPAEKPAFGQAVNQAKQAVQKQLSERIDNLKAKELEAQLVAESIDVSLPGRRIDNGGLHPVTRTIERIETFFGELGFSVKEGPEIEDDFHNFDALNISEHHPARADHDTFYFNPKVMLRTQTSGVQIRTMENEKPPLRIISPGRVYRNDYDQTHTPMFHQVEGLLVAENVNFAELKGILHDFLRNFFEEDLEVRFRPSYFPFTEPSAEVDVMGKNGKWLEVLGCGMVHPNVLRSVGIDPEKYSGFAFGMGVERLSMLRYGVNDLRSFFENDLRFLKQFK</sequence>
<dbReference type="EC" id="6.1.1.20" evidence="1"/>
<dbReference type="EMBL" id="CP000821">
    <property type="protein sequence ID" value="ABV37205.1"/>
    <property type="molecule type" value="Genomic_DNA"/>
</dbReference>
<dbReference type="RefSeq" id="WP_012142937.1">
    <property type="nucleotide sequence ID" value="NC_009831.1"/>
</dbReference>
<dbReference type="SMR" id="A8FWI2"/>
<dbReference type="STRING" id="425104.Ssed_2598"/>
<dbReference type="KEGG" id="sse:Ssed_2598"/>
<dbReference type="eggNOG" id="COG0016">
    <property type="taxonomic scope" value="Bacteria"/>
</dbReference>
<dbReference type="HOGENOM" id="CLU_025086_0_1_6"/>
<dbReference type="OrthoDB" id="9800719at2"/>
<dbReference type="Proteomes" id="UP000002015">
    <property type="component" value="Chromosome"/>
</dbReference>
<dbReference type="GO" id="GO:0005737">
    <property type="term" value="C:cytoplasm"/>
    <property type="evidence" value="ECO:0007669"/>
    <property type="project" value="UniProtKB-SubCell"/>
</dbReference>
<dbReference type="GO" id="GO:0005524">
    <property type="term" value="F:ATP binding"/>
    <property type="evidence" value="ECO:0007669"/>
    <property type="project" value="UniProtKB-UniRule"/>
</dbReference>
<dbReference type="GO" id="GO:0000287">
    <property type="term" value="F:magnesium ion binding"/>
    <property type="evidence" value="ECO:0007669"/>
    <property type="project" value="UniProtKB-UniRule"/>
</dbReference>
<dbReference type="GO" id="GO:0004826">
    <property type="term" value="F:phenylalanine-tRNA ligase activity"/>
    <property type="evidence" value="ECO:0007669"/>
    <property type="project" value="UniProtKB-UniRule"/>
</dbReference>
<dbReference type="GO" id="GO:0000049">
    <property type="term" value="F:tRNA binding"/>
    <property type="evidence" value="ECO:0007669"/>
    <property type="project" value="InterPro"/>
</dbReference>
<dbReference type="GO" id="GO:0006432">
    <property type="term" value="P:phenylalanyl-tRNA aminoacylation"/>
    <property type="evidence" value="ECO:0007669"/>
    <property type="project" value="UniProtKB-UniRule"/>
</dbReference>
<dbReference type="CDD" id="cd00496">
    <property type="entry name" value="PheRS_alpha_core"/>
    <property type="match status" value="1"/>
</dbReference>
<dbReference type="FunFam" id="3.30.930.10:FF:000003">
    <property type="entry name" value="Phenylalanine--tRNA ligase alpha subunit"/>
    <property type="match status" value="1"/>
</dbReference>
<dbReference type="Gene3D" id="3.30.930.10">
    <property type="entry name" value="Bira Bifunctional Protein, Domain 2"/>
    <property type="match status" value="1"/>
</dbReference>
<dbReference type="HAMAP" id="MF_00281">
    <property type="entry name" value="Phe_tRNA_synth_alpha1"/>
    <property type="match status" value="1"/>
</dbReference>
<dbReference type="InterPro" id="IPR006195">
    <property type="entry name" value="aa-tRNA-synth_II"/>
</dbReference>
<dbReference type="InterPro" id="IPR045864">
    <property type="entry name" value="aa-tRNA-synth_II/BPL/LPL"/>
</dbReference>
<dbReference type="InterPro" id="IPR004529">
    <property type="entry name" value="Phe-tRNA-synth_IIc_asu"/>
</dbReference>
<dbReference type="InterPro" id="IPR004188">
    <property type="entry name" value="Phe-tRNA_ligase_II_N"/>
</dbReference>
<dbReference type="InterPro" id="IPR022911">
    <property type="entry name" value="Phe_tRNA_ligase_alpha1_bac"/>
</dbReference>
<dbReference type="InterPro" id="IPR002319">
    <property type="entry name" value="Phenylalanyl-tRNA_Synthase"/>
</dbReference>
<dbReference type="InterPro" id="IPR010978">
    <property type="entry name" value="tRNA-bd_arm"/>
</dbReference>
<dbReference type="NCBIfam" id="TIGR00468">
    <property type="entry name" value="pheS"/>
    <property type="match status" value="1"/>
</dbReference>
<dbReference type="PANTHER" id="PTHR11538:SF41">
    <property type="entry name" value="PHENYLALANINE--TRNA LIGASE, MITOCHONDRIAL"/>
    <property type="match status" value="1"/>
</dbReference>
<dbReference type="PANTHER" id="PTHR11538">
    <property type="entry name" value="PHENYLALANYL-TRNA SYNTHETASE"/>
    <property type="match status" value="1"/>
</dbReference>
<dbReference type="Pfam" id="PF02912">
    <property type="entry name" value="Phe_tRNA-synt_N"/>
    <property type="match status" value="1"/>
</dbReference>
<dbReference type="Pfam" id="PF01409">
    <property type="entry name" value="tRNA-synt_2d"/>
    <property type="match status" value="1"/>
</dbReference>
<dbReference type="SUPFAM" id="SSF55681">
    <property type="entry name" value="Class II aaRS and biotin synthetases"/>
    <property type="match status" value="1"/>
</dbReference>
<dbReference type="SUPFAM" id="SSF46589">
    <property type="entry name" value="tRNA-binding arm"/>
    <property type="match status" value="1"/>
</dbReference>
<dbReference type="PROSITE" id="PS50862">
    <property type="entry name" value="AA_TRNA_LIGASE_II"/>
    <property type="match status" value="1"/>
</dbReference>
<reference key="1">
    <citation type="submission" date="2007-08" db="EMBL/GenBank/DDBJ databases">
        <title>Complete sequence of Shewanella sediminis HAW-EB3.</title>
        <authorList>
            <consortium name="US DOE Joint Genome Institute"/>
            <person name="Copeland A."/>
            <person name="Lucas S."/>
            <person name="Lapidus A."/>
            <person name="Barry K."/>
            <person name="Glavina del Rio T."/>
            <person name="Dalin E."/>
            <person name="Tice H."/>
            <person name="Pitluck S."/>
            <person name="Chertkov O."/>
            <person name="Brettin T."/>
            <person name="Bruce D."/>
            <person name="Detter J.C."/>
            <person name="Han C."/>
            <person name="Schmutz J."/>
            <person name="Larimer F."/>
            <person name="Land M."/>
            <person name="Hauser L."/>
            <person name="Kyrpides N."/>
            <person name="Kim E."/>
            <person name="Zhao J.-S."/>
            <person name="Richardson P."/>
        </authorList>
    </citation>
    <scope>NUCLEOTIDE SEQUENCE [LARGE SCALE GENOMIC DNA]</scope>
    <source>
        <strain>HAW-EB3</strain>
    </source>
</reference>
<accession>A8FWI2</accession>
<feature type="chain" id="PRO_1000078850" description="Phenylalanine--tRNA ligase alpha subunit">
    <location>
        <begin position="1"/>
        <end position="327"/>
    </location>
</feature>
<feature type="binding site" evidence="1">
    <location>
        <position position="252"/>
    </location>
    <ligand>
        <name>Mg(2+)</name>
        <dbReference type="ChEBI" id="CHEBI:18420"/>
        <note>shared with beta subunit</note>
    </ligand>
</feature>
<protein>
    <recommendedName>
        <fullName evidence="1">Phenylalanine--tRNA ligase alpha subunit</fullName>
        <ecNumber evidence="1">6.1.1.20</ecNumber>
    </recommendedName>
    <alternativeName>
        <fullName evidence="1">Phenylalanyl-tRNA synthetase alpha subunit</fullName>
        <shortName evidence="1">PheRS</shortName>
    </alternativeName>
</protein>
<evidence type="ECO:0000255" key="1">
    <source>
        <dbReference type="HAMAP-Rule" id="MF_00281"/>
    </source>
</evidence>
<comment type="catalytic activity">
    <reaction evidence="1">
        <text>tRNA(Phe) + L-phenylalanine + ATP = L-phenylalanyl-tRNA(Phe) + AMP + diphosphate + H(+)</text>
        <dbReference type="Rhea" id="RHEA:19413"/>
        <dbReference type="Rhea" id="RHEA-COMP:9668"/>
        <dbReference type="Rhea" id="RHEA-COMP:9699"/>
        <dbReference type="ChEBI" id="CHEBI:15378"/>
        <dbReference type="ChEBI" id="CHEBI:30616"/>
        <dbReference type="ChEBI" id="CHEBI:33019"/>
        <dbReference type="ChEBI" id="CHEBI:58095"/>
        <dbReference type="ChEBI" id="CHEBI:78442"/>
        <dbReference type="ChEBI" id="CHEBI:78531"/>
        <dbReference type="ChEBI" id="CHEBI:456215"/>
        <dbReference type="EC" id="6.1.1.20"/>
    </reaction>
</comment>
<comment type="cofactor">
    <cofactor evidence="1">
        <name>Mg(2+)</name>
        <dbReference type="ChEBI" id="CHEBI:18420"/>
    </cofactor>
    <text evidence="1">Binds 2 magnesium ions per tetramer.</text>
</comment>
<comment type="subunit">
    <text evidence="1">Tetramer of two alpha and two beta subunits.</text>
</comment>
<comment type="subcellular location">
    <subcellularLocation>
        <location evidence="1">Cytoplasm</location>
    </subcellularLocation>
</comment>
<comment type="similarity">
    <text evidence="1">Belongs to the class-II aminoacyl-tRNA synthetase family. Phe-tRNA synthetase alpha subunit type 1 subfamily.</text>
</comment>